<dbReference type="EC" id="7.1.2.2" evidence="1"/>
<dbReference type="EMBL" id="CP000270">
    <property type="protein sequence ID" value="ABE31080.1"/>
    <property type="molecule type" value="Genomic_DNA"/>
</dbReference>
<dbReference type="SMR" id="Q13XV9"/>
<dbReference type="STRING" id="266265.Bxe_A1885"/>
<dbReference type="KEGG" id="bxb:DR64_4048"/>
<dbReference type="KEGG" id="bxe:Bxe_A1885"/>
<dbReference type="eggNOG" id="COG0056">
    <property type="taxonomic scope" value="Bacteria"/>
</dbReference>
<dbReference type="Proteomes" id="UP000001817">
    <property type="component" value="Chromosome 1"/>
</dbReference>
<dbReference type="GO" id="GO:0005886">
    <property type="term" value="C:plasma membrane"/>
    <property type="evidence" value="ECO:0007669"/>
    <property type="project" value="UniProtKB-SubCell"/>
</dbReference>
<dbReference type="GO" id="GO:0045259">
    <property type="term" value="C:proton-transporting ATP synthase complex"/>
    <property type="evidence" value="ECO:0007669"/>
    <property type="project" value="UniProtKB-KW"/>
</dbReference>
<dbReference type="GO" id="GO:0043531">
    <property type="term" value="F:ADP binding"/>
    <property type="evidence" value="ECO:0007669"/>
    <property type="project" value="TreeGrafter"/>
</dbReference>
<dbReference type="GO" id="GO:0005524">
    <property type="term" value="F:ATP binding"/>
    <property type="evidence" value="ECO:0007669"/>
    <property type="project" value="UniProtKB-UniRule"/>
</dbReference>
<dbReference type="GO" id="GO:0046933">
    <property type="term" value="F:proton-transporting ATP synthase activity, rotational mechanism"/>
    <property type="evidence" value="ECO:0007669"/>
    <property type="project" value="UniProtKB-UniRule"/>
</dbReference>
<dbReference type="CDD" id="cd18113">
    <property type="entry name" value="ATP-synt_F1_alpha_C"/>
    <property type="match status" value="1"/>
</dbReference>
<dbReference type="CDD" id="cd18116">
    <property type="entry name" value="ATP-synt_F1_alpha_N"/>
    <property type="match status" value="1"/>
</dbReference>
<dbReference type="CDD" id="cd01132">
    <property type="entry name" value="F1-ATPase_alpha_CD"/>
    <property type="match status" value="1"/>
</dbReference>
<dbReference type="FunFam" id="3.40.50.300:FF:000002">
    <property type="entry name" value="ATP synthase subunit alpha"/>
    <property type="match status" value="1"/>
</dbReference>
<dbReference type="Gene3D" id="2.40.30.20">
    <property type="match status" value="1"/>
</dbReference>
<dbReference type="Gene3D" id="1.20.150.20">
    <property type="entry name" value="ATP synthase alpha/beta chain, C-terminal domain"/>
    <property type="match status" value="1"/>
</dbReference>
<dbReference type="Gene3D" id="3.40.50.300">
    <property type="entry name" value="P-loop containing nucleotide triphosphate hydrolases"/>
    <property type="match status" value="1"/>
</dbReference>
<dbReference type="HAMAP" id="MF_01346">
    <property type="entry name" value="ATP_synth_alpha_bact"/>
    <property type="match status" value="1"/>
</dbReference>
<dbReference type="InterPro" id="IPR023366">
    <property type="entry name" value="ATP_synth_asu-like_sf"/>
</dbReference>
<dbReference type="InterPro" id="IPR000793">
    <property type="entry name" value="ATP_synth_asu_C"/>
</dbReference>
<dbReference type="InterPro" id="IPR038376">
    <property type="entry name" value="ATP_synth_asu_C_sf"/>
</dbReference>
<dbReference type="InterPro" id="IPR033732">
    <property type="entry name" value="ATP_synth_F1_a_nt-bd_dom"/>
</dbReference>
<dbReference type="InterPro" id="IPR005294">
    <property type="entry name" value="ATP_synth_F1_asu"/>
</dbReference>
<dbReference type="InterPro" id="IPR020003">
    <property type="entry name" value="ATPase_a/bsu_AS"/>
</dbReference>
<dbReference type="InterPro" id="IPR036121">
    <property type="entry name" value="ATPase_F1/V1/A1_a/bsu_N_sf"/>
</dbReference>
<dbReference type="InterPro" id="IPR000194">
    <property type="entry name" value="ATPase_F1/V1/A1_a/bsu_nucl-bd"/>
</dbReference>
<dbReference type="InterPro" id="IPR027417">
    <property type="entry name" value="P-loop_NTPase"/>
</dbReference>
<dbReference type="NCBIfam" id="TIGR00962">
    <property type="entry name" value="atpA"/>
    <property type="match status" value="1"/>
</dbReference>
<dbReference type="NCBIfam" id="NF009884">
    <property type="entry name" value="PRK13343.1"/>
    <property type="match status" value="1"/>
</dbReference>
<dbReference type="PANTHER" id="PTHR48082">
    <property type="entry name" value="ATP SYNTHASE SUBUNIT ALPHA, MITOCHONDRIAL"/>
    <property type="match status" value="1"/>
</dbReference>
<dbReference type="PANTHER" id="PTHR48082:SF2">
    <property type="entry name" value="ATP SYNTHASE SUBUNIT ALPHA, MITOCHONDRIAL"/>
    <property type="match status" value="1"/>
</dbReference>
<dbReference type="Pfam" id="PF00006">
    <property type="entry name" value="ATP-synt_ab"/>
    <property type="match status" value="1"/>
</dbReference>
<dbReference type="Pfam" id="PF00306">
    <property type="entry name" value="ATP-synt_ab_C"/>
    <property type="match status" value="1"/>
</dbReference>
<dbReference type="SUPFAM" id="SSF47917">
    <property type="entry name" value="C-terminal domain of alpha and beta subunits of F1 ATP synthase"/>
    <property type="match status" value="1"/>
</dbReference>
<dbReference type="SUPFAM" id="SSF50615">
    <property type="entry name" value="N-terminal domain of alpha and beta subunits of F1 ATP synthase"/>
    <property type="match status" value="1"/>
</dbReference>
<dbReference type="SUPFAM" id="SSF52540">
    <property type="entry name" value="P-loop containing nucleoside triphosphate hydrolases"/>
    <property type="match status" value="1"/>
</dbReference>
<dbReference type="PROSITE" id="PS00152">
    <property type="entry name" value="ATPASE_ALPHA_BETA"/>
    <property type="match status" value="1"/>
</dbReference>
<protein>
    <recommendedName>
        <fullName evidence="1">ATP synthase subunit alpha 1</fullName>
        <ecNumber evidence="1">7.1.2.2</ecNumber>
    </recommendedName>
    <alternativeName>
        <fullName evidence="1">ATP synthase F1 sector subunit alpha 1</fullName>
    </alternativeName>
    <alternativeName>
        <fullName evidence="1">F-ATPase subunit alpha 1</fullName>
    </alternativeName>
</protein>
<reference key="1">
    <citation type="journal article" date="2006" name="Proc. Natl. Acad. Sci. U.S.A.">
        <title>Burkholderia xenovorans LB400 harbors a multi-replicon, 9.73-Mbp genome shaped for versatility.</title>
        <authorList>
            <person name="Chain P.S.G."/>
            <person name="Denef V.J."/>
            <person name="Konstantinidis K.T."/>
            <person name="Vergez L.M."/>
            <person name="Agullo L."/>
            <person name="Reyes V.L."/>
            <person name="Hauser L."/>
            <person name="Cordova M."/>
            <person name="Gomez L."/>
            <person name="Gonzalez M."/>
            <person name="Land M."/>
            <person name="Lao V."/>
            <person name="Larimer F."/>
            <person name="LiPuma J.J."/>
            <person name="Mahenthiralingam E."/>
            <person name="Malfatti S.A."/>
            <person name="Marx C.J."/>
            <person name="Parnell J.J."/>
            <person name="Ramette A."/>
            <person name="Richardson P."/>
            <person name="Seeger M."/>
            <person name="Smith D."/>
            <person name="Spilker T."/>
            <person name="Sul W.J."/>
            <person name="Tsoi T.V."/>
            <person name="Ulrich L.E."/>
            <person name="Zhulin I.B."/>
            <person name="Tiedje J.M."/>
        </authorList>
    </citation>
    <scope>NUCLEOTIDE SEQUENCE [LARGE SCALE GENOMIC DNA]</scope>
    <source>
        <strain>LB400</strain>
    </source>
</reference>
<name>ATPA1_PARXL</name>
<comment type="function">
    <text evidence="1">Produces ATP from ADP in the presence of a proton gradient across the membrane. The alpha chain is a regulatory subunit.</text>
</comment>
<comment type="catalytic activity">
    <reaction evidence="1">
        <text>ATP + H2O + 4 H(+)(in) = ADP + phosphate + 5 H(+)(out)</text>
        <dbReference type="Rhea" id="RHEA:57720"/>
        <dbReference type="ChEBI" id="CHEBI:15377"/>
        <dbReference type="ChEBI" id="CHEBI:15378"/>
        <dbReference type="ChEBI" id="CHEBI:30616"/>
        <dbReference type="ChEBI" id="CHEBI:43474"/>
        <dbReference type="ChEBI" id="CHEBI:456216"/>
        <dbReference type="EC" id="7.1.2.2"/>
    </reaction>
</comment>
<comment type="subunit">
    <text evidence="1">F-type ATPases have 2 components, CF(1) - the catalytic core - and CF(0) - the membrane proton channel. CF(1) has five subunits: alpha(3), beta(3), gamma(1), delta(1), epsilon(1). CF(0) has three main subunits: a(1), b(2) and c(9-12). The alpha and beta chains form an alternating ring which encloses part of the gamma chain. CF(1) is attached to CF(0) by a central stalk formed by the gamma and epsilon chains, while a peripheral stalk is formed by the delta and b chains.</text>
</comment>
<comment type="subcellular location">
    <subcellularLocation>
        <location evidence="1">Cell inner membrane</location>
        <topology evidence="1">Peripheral membrane protein</topology>
    </subcellularLocation>
</comment>
<comment type="similarity">
    <text evidence="1">Belongs to the ATPase alpha/beta chains family.</text>
</comment>
<gene>
    <name evidence="1" type="primary">atpA1</name>
    <name type="ordered locus">Bxeno_A2542</name>
    <name type="ORF">Bxe_A1885</name>
</gene>
<keyword id="KW-0066">ATP synthesis</keyword>
<keyword id="KW-0067">ATP-binding</keyword>
<keyword id="KW-0997">Cell inner membrane</keyword>
<keyword id="KW-1003">Cell membrane</keyword>
<keyword id="KW-0139">CF(1)</keyword>
<keyword id="KW-0375">Hydrogen ion transport</keyword>
<keyword id="KW-0406">Ion transport</keyword>
<keyword id="KW-0472">Membrane</keyword>
<keyword id="KW-0547">Nucleotide-binding</keyword>
<keyword id="KW-1185">Reference proteome</keyword>
<keyword id="KW-1278">Translocase</keyword>
<keyword id="KW-0813">Transport</keyword>
<organism>
    <name type="scientific">Paraburkholderia xenovorans (strain LB400)</name>
    <dbReference type="NCBI Taxonomy" id="266265"/>
    <lineage>
        <taxon>Bacteria</taxon>
        <taxon>Pseudomonadati</taxon>
        <taxon>Pseudomonadota</taxon>
        <taxon>Betaproteobacteria</taxon>
        <taxon>Burkholderiales</taxon>
        <taxon>Burkholderiaceae</taxon>
        <taxon>Paraburkholderia</taxon>
    </lineage>
</organism>
<feature type="chain" id="PRO_0000256083" description="ATP synthase subunit alpha 1">
    <location>
        <begin position="1"/>
        <end position="510"/>
    </location>
</feature>
<feature type="binding site" evidence="1">
    <location>
        <begin position="167"/>
        <end position="174"/>
    </location>
    <ligand>
        <name>ATP</name>
        <dbReference type="ChEBI" id="CHEBI:30616"/>
    </ligand>
</feature>
<feature type="site" description="Required for activity" evidence="1">
    <location>
        <position position="360"/>
    </location>
</feature>
<accession>Q13XV9</accession>
<proteinExistence type="inferred from homology"/>
<evidence type="ECO:0000255" key="1">
    <source>
        <dbReference type="HAMAP-Rule" id="MF_01346"/>
    </source>
</evidence>
<sequence length="510" mass="54048">MSDDAWLAAQRKVLARTAPAPYADTLGRVERIGDGIAFVSGLADAALDELLRFESGASGFVHTLEADLMSVVLLDDGATVEAGARVTRTGAVIEVPVGEGLLGRVIDPLGRPLDRDEPVATVKRMPIERPAPAIIDRDLVSEPVETGVLIVDALFAVGRGQRELIIGDRATGKTALALDAIVNQKHSDMICIYVAIGQRSTAVQQVIESVRRYGAPERCVFVVAPAASAAGLQWIAPFAGVTIAEYFRDRGQHALVVIDDLTKHAATHRELALLTREPPGREAYPGDIFYVHARLLERAAKLSAKLGGGSLTALPIAETDAGNLSAYIPTNLISITDGQIVLDAALFAANQRPAVDVGLSVSRVGGKAQHPALREVSGRLRLDYAQFLELEMFSRFGGLTDAHVAGKIARGERIRALIAQPRFRPLRTVDEIALLAALAEGVFDAAPPAIATEARAQLAEQLLGAGMAAGWMDAPLDPATQAALVTTVREIVQRLTLEAANVPARTGSGK</sequence>